<name>EASE_ARTBC</name>
<organism>
    <name type="scientific">Arthroderma benhamiae (strain ATCC MYA-4681 / CBS 112371)</name>
    <name type="common">Trichophyton mentagrophytes</name>
    <dbReference type="NCBI Taxonomy" id="663331"/>
    <lineage>
        <taxon>Eukaryota</taxon>
        <taxon>Fungi</taxon>
        <taxon>Dikarya</taxon>
        <taxon>Ascomycota</taxon>
        <taxon>Pezizomycotina</taxon>
        <taxon>Eurotiomycetes</taxon>
        <taxon>Eurotiomycetidae</taxon>
        <taxon>Onygenales</taxon>
        <taxon>Arthrodermataceae</taxon>
        <taxon>Trichophyton</taxon>
    </lineage>
</organism>
<evidence type="ECO:0000255" key="1">
    <source>
        <dbReference type="PROSITE-ProRule" id="PRU00718"/>
    </source>
</evidence>
<evidence type="ECO:0000269" key="2">
    <source>
    </source>
</evidence>
<evidence type="ECO:0000303" key="3">
    <source>
    </source>
</evidence>
<evidence type="ECO:0000305" key="4"/>
<evidence type="ECO:0000305" key="5">
    <source>
    </source>
</evidence>
<gene>
    <name evidence="3" type="primary">easE</name>
    <name type="ORF">ARB_04648</name>
</gene>
<sequence>MLTGVLQDWVWEAGETANESCPVGSLRTASAVNSCHQGRIPLFTVGVESTKQVQEAVRFARKHNLRLVIRNTGHDLAGRSSAPDSFQIHTHHLQEIQFHADMRLDGSNTSLGPAVTVGAGVMMGNLYAQAARHGYMVLGGDCPTVGVVGGFLQGGGISDFLSLNQGFGVDNVLEYEVVTADGELVVANALQNQDLFWALRGGGGGTFGVVTRATMRVFPDVPVVISEILLEAPQAISSSWTQGLSIVLTALQSLNRDNVGGQLVIAVLPKLAVQASIKFFFLDATEATVIDRRMKPFLTKLSRANVKYTYSSKNLPHFSSNYRQVPDIHSDNDYGVLGSTVAISQQLFDSPQGPEKVATALANLPVSAGDLIFTSNLGGRVISNGELAETSMHPAWRSASQLINYVHTVEPSIEGRAKARERLTNTQMPMLYALDPNLKLSYRNVGDPNEKDFQQIYWGPNYGRLSNIKKKWDTDDLFFSKLGVGSERWDSEEQLCLLHA</sequence>
<reference key="1">
    <citation type="journal article" date="2011" name="Genome Biol.">
        <title>Comparative and functional genomics provide insights into the pathogenicity of dermatophytic fungi.</title>
        <authorList>
            <person name="Burmester A."/>
            <person name="Shelest E."/>
            <person name="Gloeckner G."/>
            <person name="Heddergott C."/>
            <person name="Schindler S."/>
            <person name="Staib P."/>
            <person name="Heidel A."/>
            <person name="Felder M."/>
            <person name="Petzold A."/>
            <person name="Szafranski K."/>
            <person name="Feuermann M."/>
            <person name="Pedruzzi I."/>
            <person name="Priebe S."/>
            <person name="Groth M."/>
            <person name="Winkler R."/>
            <person name="Li W."/>
            <person name="Kniemeyer O."/>
            <person name="Schroeckh V."/>
            <person name="Hertweck C."/>
            <person name="Hube B."/>
            <person name="White T.C."/>
            <person name="Platzer M."/>
            <person name="Guthke R."/>
            <person name="Heitman J."/>
            <person name="Woestemeyer J."/>
            <person name="Zipfel P.F."/>
            <person name="Monod M."/>
            <person name="Brakhage A.A."/>
        </authorList>
    </citation>
    <scope>NUCLEOTIDE SEQUENCE [LARGE SCALE GENOMIC DNA]</scope>
    <source>
        <strain>ATCC MYA-4681 / CBS 112371</strain>
    </source>
</reference>
<reference key="2">
    <citation type="journal article" date="2012" name="Microbiology">
        <title>Genome mining reveals the presence of a conserved gene cluster for the biosynthesis of ergot alkaloid precursors in the fungal family Arthrodermataceae.</title>
        <authorList>
            <person name="Wallwey C."/>
            <person name="Heddergott C."/>
            <person name="Xie X."/>
            <person name="Brakhage A.A."/>
            <person name="Li S.M."/>
        </authorList>
    </citation>
    <scope>FUNCTION</scope>
</reference>
<feature type="chain" id="PRO_0000439134" description="FAD-linked oxidoreductase easE">
    <location>
        <begin position="1"/>
        <end position="500"/>
    </location>
</feature>
<feature type="domain" description="FAD-binding PCMH-type" evidence="1">
    <location>
        <begin position="37"/>
        <end position="220"/>
    </location>
</feature>
<comment type="function">
    <text evidence="2">FAD-linked oxidoreductase; part of the gene cluster that mediates the biosynthesis of fungal ergot alkaloid (PubMed:22403186). DmaW catalyzes the first step of ergot alkaloid biosynthesis by condensing dimethylallyl diphosphate (DMAP) and tryptophan to form 4-dimethylallyl-L-tryptophan (PubMed:22403186). The second step is catalyzed by the methyltransferase easF that methylates 4-dimethylallyl-L-tryptophan in the presence of S-adenosyl-L-methionine, resulting in the formation of 4-dimethylallyl-L-abrine (PubMed:22403186). The catalase easC and the FAD-dependent oxidoreductase easE then transform 4-dimethylallyl-L-abrine to chanoclavine-I which is further oxidized by easD in the presence of NAD(+), resulting in the formation of chanoclavine-I aldehyde (PubMed:22403186). Chanoclavine-I aldehyde is the precursor of ergoamides and ergopeptines in Clavicipitaceae, and clavine-type alcaloids such as fumiclavine in Trichocomaceae (PubMed:22403186). However, the metabolites downstream of chanoclavine-I aldehyde in Arthrodermataceae have not been identified yet (PubMed:22403186).</text>
</comment>
<comment type="cofactor">
    <cofactor evidence="4">
        <name>FAD</name>
        <dbReference type="ChEBI" id="CHEBI:57692"/>
    </cofactor>
</comment>
<comment type="pathway">
    <text evidence="5">Alkaloid biosynthesis; ergot alkaloid biosynthesis.</text>
</comment>
<comment type="similarity">
    <text evidence="4">Belongs to the oxygen-dependent FAD-linked oxidoreductase family.</text>
</comment>
<keyword id="KW-0017">Alkaloid metabolism</keyword>
<keyword id="KW-0274">FAD</keyword>
<keyword id="KW-0285">Flavoprotein</keyword>
<keyword id="KW-0560">Oxidoreductase</keyword>
<keyword id="KW-1185">Reference proteome</keyword>
<protein>
    <recommendedName>
        <fullName evidence="3">FAD-linked oxidoreductase easE</fullName>
        <ecNumber evidence="5">1.-.-.-</ecNumber>
    </recommendedName>
    <alternativeName>
        <fullName evidence="4">Chanoclavine I synthase</fullName>
    </alternativeName>
    <alternativeName>
        <fullName evidence="3">Ergot alkaloid synthesis protein E</fullName>
    </alternativeName>
</protein>
<accession>D4AK47</accession>
<proteinExistence type="inferred from homology"/>
<dbReference type="EC" id="1.-.-.-" evidence="5"/>
<dbReference type="EMBL" id="ABSU01000001">
    <property type="protein sequence ID" value="EFE37120.1"/>
    <property type="molecule type" value="Genomic_DNA"/>
</dbReference>
<dbReference type="RefSeq" id="XP_003017765.1">
    <property type="nucleotide sequence ID" value="XM_003017719.1"/>
</dbReference>
<dbReference type="SMR" id="D4AK47"/>
<dbReference type="GeneID" id="9522611"/>
<dbReference type="KEGG" id="abe:ARB_04648"/>
<dbReference type="eggNOG" id="ENOG502R8I5">
    <property type="taxonomic scope" value="Eukaryota"/>
</dbReference>
<dbReference type="HOGENOM" id="CLU_018354_4_4_1"/>
<dbReference type="OMA" id="CHQGRIP"/>
<dbReference type="UniPathway" id="UPA00327"/>
<dbReference type="Proteomes" id="UP000008866">
    <property type="component" value="Unassembled WGS sequence"/>
</dbReference>
<dbReference type="GO" id="GO:0071949">
    <property type="term" value="F:FAD binding"/>
    <property type="evidence" value="ECO:0007669"/>
    <property type="project" value="InterPro"/>
</dbReference>
<dbReference type="GO" id="GO:0016491">
    <property type="term" value="F:oxidoreductase activity"/>
    <property type="evidence" value="ECO:0007669"/>
    <property type="project" value="UniProtKB-KW"/>
</dbReference>
<dbReference type="GO" id="GO:0035835">
    <property type="term" value="P:indole alkaloid biosynthetic process"/>
    <property type="evidence" value="ECO:0007669"/>
    <property type="project" value="UniProtKB-UniPathway"/>
</dbReference>
<dbReference type="Gene3D" id="3.30.465.10">
    <property type="match status" value="2"/>
</dbReference>
<dbReference type="InterPro" id="IPR012951">
    <property type="entry name" value="BBE"/>
</dbReference>
<dbReference type="InterPro" id="IPR016166">
    <property type="entry name" value="FAD-bd_PCMH"/>
</dbReference>
<dbReference type="InterPro" id="IPR036318">
    <property type="entry name" value="FAD-bd_PCMH-like_sf"/>
</dbReference>
<dbReference type="InterPro" id="IPR016169">
    <property type="entry name" value="FAD-bd_PCMH_sub2"/>
</dbReference>
<dbReference type="InterPro" id="IPR050416">
    <property type="entry name" value="FAD-linked_Oxidoreductase"/>
</dbReference>
<dbReference type="InterPro" id="IPR006094">
    <property type="entry name" value="Oxid_FAD_bind_N"/>
</dbReference>
<dbReference type="PANTHER" id="PTHR42973">
    <property type="entry name" value="BINDING OXIDOREDUCTASE, PUTATIVE (AFU_ORTHOLOGUE AFUA_1G17690)-RELATED"/>
    <property type="match status" value="1"/>
</dbReference>
<dbReference type="PANTHER" id="PTHR42973:SF39">
    <property type="entry name" value="FAD-BINDING PCMH-TYPE DOMAIN-CONTAINING PROTEIN"/>
    <property type="match status" value="1"/>
</dbReference>
<dbReference type="Pfam" id="PF08031">
    <property type="entry name" value="BBE"/>
    <property type="match status" value="1"/>
</dbReference>
<dbReference type="Pfam" id="PF01565">
    <property type="entry name" value="FAD_binding_4"/>
    <property type="match status" value="1"/>
</dbReference>
<dbReference type="SUPFAM" id="SSF56176">
    <property type="entry name" value="FAD-binding/transporter-associated domain-like"/>
    <property type="match status" value="1"/>
</dbReference>
<dbReference type="PROSITE" id="PS51387">
    <property type="entry name" value="FAD_PCMH"/>
    <property type="match status" value="1"/>
</dbReference>